<evidence type="ECO:0000250" key="1">
    <source>
        <dbReference type="UniProtKB" id="P0C0V0"/>
    </source>
</evidence>
<evidence type="ECO:0000255" key="2"/>
<evidence type="ECO:0000255" key="3">
    <source>
        <dbReference type="PROSITE-ProRule" id="PRU00143"/>
    </source>
</evidence>
<evidence type="ECO:0000256" key="4">
    <source>
        <dbReference type="SAM" id="MobiDB-lite"/>
    </source>
</evidence>
<evidence type="ECO:0000269" key="5">
    <source>
    </source>
</evidence>
<evidence type="ECO:0000269" key="6">
    <source>
    </source>
</evidence>
<evidence type="ECO:0000269" key="7">
    <source>
    </source>
</evidence>
<evidence type="ECO:0000303" key="8">
    <source>
    </source>
</evidence>
<evidence type="ECO:0000303" key="9">
    <source>
    </source>
</evidence>
<evidence type="ECO:0000305" key="10"/>
<evidence type="ECO:0000305" key="11">
    <source>
    </source>
</evidence>
<evidence type="ECO:0000312" key="12">
    <source>
        <dbReference type="EMBL" id="CCP43979.1"/>
    </source>
</evidence>
<evidence type="ECO:0007744" key="13">
    <source>
        <dbReference type="PDB" id="5ZVJ"/>
    </source>
</evidence>
<evidence type="ECO:0007744" key="14">
    <source>
        <dbReference type="PDB" id="6IEO"/>
    </source>
</evidence>
<evidence type="ECO:0007829" key="15">
    <source>
        <dbReference type="PDB" id="5ZVJ"/>
    </source>
</evidence>
<evidence type="ECO:0007829" key="16">
    <source>
        <dbReference type="PDB" id="6IEO"/>
    </source>
</evidence>
<evidence type="ECO:0007829" key="17">
    <source>
        <dbReference type="PDB" id="7W25"/>
    </source>
</evidence>
<keyword id="KW-0002">3D-structure</keyword>
<keyword id="KW-0997">Cell inner membrane</keyword>
<keyword id="KW-1003">Cell membrane</keyword>
<keyword id="KW-0378">Hydrolase</keyword>
<keyword id="KW-0472">Membrane</keyword>
<keyword id="KW-0645">Protease</keyword>
<keyword id="KW-1185">Reference proteome</keyword>
<keyword id="KW-0720">Serine protease</keyword>
<keyword id="KW-0812">Transmembrane</keyword>
<keyword id="KW-1133">Transmembrane helix</keyword>
<proteinExistence type="evidence at protein level"/>
<accession>O06291</accession>
<accession>F2GFU0</accession>
<accession>I6Y608</accession>
<accession>Q8VK49</accession>
<dbReference type="EC" id="3.4.21.107" evidence="1"/>
<dbReference type="EMBL" id="AL123456">
    <property type="protein sequence ID" value="CCP43979.1"/>
    <property type="molecule type" value="Genomic_DNA"/>
</dbReference>
<dbReference type="RefSeq" id="NP_215739.2">
    <property type="nucleotide sequence ID" value="NC_000962.3"/>
</dbReference>
<dbReference type="RefSeq" id="WP_003898779.1">
    <property type="nucleotide sequence ID" value="NC_000962.3"/>
</dbReference>
<dbReference type="PDB" id="5ZVJ">
    <property type="method" value="X-ray"/>
    <property type="resolution" value="2.70 A"/>
    <property type="chains" value="A=206-528"/>
</dbReference>
<dbReference type="PDB" id="6IEO">
    <property type="method" value="X-ray"/>
    <property type="resolution" value="1.83 A"/>
    <property type="chains" value="A=223-528"/>
</dbReference>
<dbReference type="PDB" id="7VYZ">
    <property type="method" value="X-ray"/>
    <property type="resolution" value="2.40 A"/>
    <property type="chains" value="A=223-528"/>
</dbReference>
<dbReference type="PDB" id="7VZ0">
    <property type="method" value="X-ray"/>
    <property type="resolution" value="1.95 A"/>
    <property type="chains" value="A=226-528"/>
</dbReference>
<dbReference type="PDB" id="7W21">
    <property type="method" value="X-ray"/>
    <property type="resolution" value="2.00 A"/>
    <property type="chains" value="A=226-528"/>
</dbReference>
<dbReference type="PDB" id="7W22">
    <property type="method" value="X-ray"/>
    <property type="resolution" value="2.01 A"/>
    <property type="chains" value="A=223-528"/>
</dbReference>
<dbReference type="PDB" id="7W23">
    <property type="method" value="X-ray"/>
    <property type="resolution" value="1.90 A"/>
    <property type="chains" value="A=223-528"/>
</dbReference>
<dbReference type="PDB" id="7W24">
    <property type="method" value="X-ray"/>
    <property type="resolution" value="2.90 A"/>
    <property type="chains" value="A=226-528"/>
</dbReference>
<dbReference type="PDB" id="7W25">
    <property type="method" value="X-ray"/>
    <property type="resolution" value="2.65 A"/>
    <property type="chains" value="A=226-528"/>
</dbReference>
<dbReference type="PDB" id="7W4R">
    <property type="method" value="X-ray"/>
    <property type="resolution" value="2.70 A"/>
    <property type="chains" value="A=223-528"/>
</dbReference>
<dbReference type="PDB" id="7W4S">
    <property type="method" value="X-ray"/>
    <property type="resolution" value="2.60 A"/>
    <property type="chains" value="A=223-528"/>
</dbReference>
<dbReference type="PDB" id="7W4T">
    <property type="method" value="X-ray"/>
    <property type="resolution" value="2.20 A"/>
    <property type="chains" value="A=223-528"/>
</dbReference>
<dbReference type="PDB" id="7W4U">
    <property type="method" value="X-ray"/>
    <property type="resolution" value="2.30 A"/>
    <property type="chains" value="A=226-528"/>
</dbReference>
<dbReference type="PDB" id="7W4V">
    <property type="method" value="X-ray"/>
    <property type="resolution" value="2.70 A"/>
    <property type="chains" value="A=223-528"/>
</dbReference>
<dbReference type="PDB" id="7W4W">
    <property type="method" value="X-ray"/>
    <property type="resolution" value="2.00 A"/>
    <property type="chains" value="A=223-528"/>
</dbReference>
<dbReference type="PDBsum" id="5ZVJ"/>
<dbReference type="PDBsum" id="6IEO"/>
<dbReference type="PDBsum" id="7VYZ"/>
<dbReference type="PDBsum" id="7VZ0"/>
<dbReference type="PDBsum" id="7W21"/>
<dbReference type="PDBsum" id="7W22"/>
<dbReference type="PDBsum" id="7W23"/>
<dbReference type="PDBsum" id="7W24"/>
<dbReference type="PDBsum" id="7W25"/>
<dbReference type="PDBsum" id="7W4R"/>
<dbReference type="PDBsum" id="7W4S"/>
<dbReference type="PDBsum" id="7W4T"/>
<dbReference type="PDBsum" id="7W4U"/>
<dbReference type="PDBsum" id="7W4V"/>
<dbReference type="PDBsum" id="7W4W"/>
<dbReference type="SMR" id="O06291"/>
<dbReference type="FunCoup" id="O06291">
    <property type="interactions" value="348"/>
</dbReference>
<dbReference type="STRING" id="83332.Rv1223"/>
<dbReference type="PaxDb" id="83332-Rv1223"/>
<dbReference type="DNASU" id="888912"/>
<dbReference type="GeneID" id="888912"/>
<dbReference type="KEGG" id="mtu:Rv1223"/>
<dbReference type="KEGG" id="mtv:RVBD_1223"/>
<dbReference type="PATRIC" id="fig|83332.111.peg.1367"/>
<dbReference type="TubercuList" id="Rv1223"/>
<dbReference type="eggNOG" id="COG0265">
    <property type="taxonomic scope" value="Bacteria"/>
</dbReference>
<dbReference type="InParanoid" id="O06291"/>
<dbReference type="OrthoDB" id="9758917at2"/>
<dbReference type="PhylomeDB" id="O06291"/>
<dbReference type="Proteomes" id="UP000001584">
    <property type="component" value="Chromosome"/>
</dbReference>
<dbReference type="GO" id="GO:0009274">
    <property type="term" value="C:peptidoglycan-based cell wall"/>
    <property type="evidence" value="ECO:0007005"/>
    <property type="project" value="MTBBASE"/>
</dbReference>
<dbReference type="GO" id="GO:0005886">
    <property type="term" value="C:plasma membrane"/>
    <property type="evidence" value="ECO:0007005"/>
    <property type="project" value="MTBBASE"/>
</dbReference>
<dbReference type="GO" id="GO:0004252">
    <property type="term" value="F:serine-type endopeptidase activity"/>
    <property type="evidence" value="ECO:0007669"/>
    <property type="project" value="InterPro"/>
</dbReference>
<dbReference type="GO" id="GO:0006508">
    <property type="term" value="P:proteolysis"/>
    <property type="evidence" value="ECO:0007669"/>
    <property type="project" value="UniProtKB-KW"/>
</dbReference>
<dbReference type="CDD" id="cd06779">
    <property type="entry name" value="cpPDZ_Deg_HtrA-like"/>
    <property type="match status" value="1"/>
</dbReference>
<dbReference type="FunFam" id="2.40.10.10:FF:000001">
    <property type="entry name" value="Periplasmic serine protease DegS"/>
    <property type="match status" value="1"/>
</dbReference>
<dbReference type="FunFam" id="2.30.42.10:FF:000207">
    <property type="entry name" value="Serine protease"/>
    <property type="match status" value="1"/>
</dbReference>
<dbReference type="FunFam" id="2.40.10.10:FF:000104">
    <property type="entry name" value="Serine protease HtrA"/>
    <property type="match status" value="1"/>
</dbReference>
<dbReference type="Gene3D" id="2.30.42.10">
    <property type="match status" value="1"/>
</dbReference>
<dbReference type="Gene3D" id="2.40.10.10">
    <property type="entry name" value="Trypsin-like serine proteases"/>
    <property type="match status" value="2"/>
</dbReference>
<dbReference type="InterPro" id="IPR051201">
    <property type="entry name" value="Chloro_Bact_Ser_Proteases"/>
</dbReference>
<dbReference type="InterPro" id="IPR001478">
    <property type="entry name" value="PDZ"/>
</dbReference>
<dbReference type="InterPro" id="IPR036034">
    <property type="entry name" value="PDZ_sf"/>
</dbReference>
<dbReference type="InterPro" id="IPR009003">
    <property type="entry name" value="Peptidase_S1_PA"/>
</dbReference>
<dbReference type="InterPro" id="IPR043504">
    <property type="entry name" value="Peptidase_S1_PA_chymotrypsin"/>
</dbReference>
<dbReference type="InterPro" id="IPR001940">
    <property type="entry name" value="Peptidase_S1C"/>
</dbReference>
<dbReference type="PANTHER" id="PTHR43343">
    <property type="entry name" value="PEPTIDASE S12"/>
    <property type="match status" value="1"/>
</dbReference>
<dbReference type="PANTHER" id="PTHR43343:SF3">
    <property type="entry name" value="PROTEASE DO-LIKE 8, CHLOROPLASTIC"/>
    <property type="match status" value="1"/>
</dbReference>
<dbReference type="Pfam" id="PF13180">
    <property type="entry name" value="PDZ_2"/>
    <property type="match status" value="1"/>
</dbReference>
<dbReference type="Pfam" id="PF13365">
    <property type="entry name" value="Trypsin_2"/>
    <property type="match status" value="1"/>
</dbReference>
<dbReference type="PRINTS" id="PR00834">
    <property type="entry name" value="PROTEASES2C"/>
</dbReference>
<dbReference type="SMART" id="SM00228">
    <property type="entry name" value="PDZ"/>
    <property type="match status" value="1"/>
</dbReference>
<dbReference type="SUPFAM" id="SSF50156">
    <property type="entry name" value="PDZ domain-like"/>
    <property type="match status" value="1"/>
</dbReference>
<dbReference type="SUPFAM" id="SSF50494">
    <property type="entry name" value="Trypsin-like serine proteases"/>
    <property type="match status" value="1"/>
</dbReference>
<comment type="function">
    <text evidence="7">Essential protein that may act as a regulatory protease that is conditionally activated upon appropriate environmental triggers.</text>
</comment>
<comment type="catalytic activity">
    <reaction evidence="1">
        <text>Acts on substrates that are at least partially unfolded. The cleavage site P1 residue is normally between a pair of hydrophobic residues, such as Val-|-Val.</text>
        <dbReference type="EC" id="3.4.21.107"/>
    </reaction>
</comment>
<comment type="subunit">
    <text evidence="6 7">The C-terminal region exhibits both monomeric and trimeric forms in solution.</text>
</comment>
<comment type="subcellular location">
    <subcellularLocation>
        <location evidence="5">Cell inner membrane</location>
        <topology evidence="2">Single-pass membrane protein</topology>
    </subcellularLocation>
</comment>
<comment type="domain">
    <text evidence="6 7">The periplasmic region consists of a protease domain (PD) and a PDZ domain, connected by a ten-residue linker (PubMed:30198900). Interactions between the PDZ domain and the catalytic domain lead to an inactive conformation (PubMed:30511675).</text>
</comment>
<comment type="similarity">
    <text evidence="10">Belongs to the peptidase S1C family.</text>
</comment>
<reference key="1">
    <citation type="journal article" date="1998" name="Nature">
        <title>Deciphering the biology of Mycobacterium tuberculosis from the complete genome sequence.</title>
        <authorList>
            <person name="Cole S.T."/>
            <person name="Brosch R."/>
            <person name="Parkhill J."/>
            <person name="Garnier T."/>
            <person name="Churcher C.M."/>
            <person name="Harris D.E."/>
            <person name="Gordon S.V."/>
            <person name="Eiglmeier K."/>
            <person name="Gas S."/>
            <person name="Barry C.E. III"/>
            <person name="Tekaia F."/>
            <person name="Badcock K."/>
            <person name="Basham D."/>
            <person name="Brown D."/>
            <person name="Chillingworth T."/>
            <person name="Connor R."/>
            <person name="Davies R.M."/>
            <person name="Devlin K."/>
            <person name="Feltwell T."/>
            <person name="Gentles S."/>
            <person name="Hamlin N."/>
            <person name="Holroyd S."/>
            <person name="Hornsby T."/>
            <person name="Jagels K."/>
            <person name="Krogh A."/>
            <person name="McLean J."/>
            <person name="Moule S."/>
            <person name="Murphy L.D."/>
            <person name="Oliver S."/>
            <person name="Osborne J."/>
            <person name="Quail M.A."/>
            <person name="Rajandream M.A."/>
            <person name="Rogers J."/>
            <person name="Rutter S."/>
            <person name="Seeger K."/>
            <person name="Skelton S."/>
            <person name="Squares S."/>
            <person name="Squares R."/>
            <person name="Sulston J.E."/>
            <person name="Taylor K."/>
            <person name="Whitehead S."/>
            <person name="Barrell B.G."/>
        </authorList>
    </citation>
    <scope>NUCLEOTIDE SEQUENCE [LARGE SCALE GENOMIC DNA]</scope>
    <source>
        <strain>ATCC 25618 / H37Rv</strain>
    </source>
</reference>
<reference key="2">
    <citation type="journal article" date="2005" name="J. Proteome Res.">
        <title>Identification of Mycobacterium tuberculosis H37Rv integral membrane proteins by one-dimensional gel electrophoresis and liquid chromatography electrospray ionization tandem mass spectrometry.</title>
        <authorList>
            <person name="Xiong Y."/>
            <person name="Chalmers M.J."/>
            <person name="Gao F.P."/>
            <person name="Cross T.A."/>
            <person name="Marshall A.G."/>
        </authorList>
    </citation>
    <scope>SUBCELLULAR LOCATION</scope>
    <source>
        <strain>ATCC 25618 / H37Rv</strain>
    </source>
</reference>
<reference key="3">
    <citation type="journal article" date="2011" name="Mol. Cell. Proteomics">
        <title>Proteogenomic analysis of Mycobacterium tuberculosis by high resolution mass spectrometry.</title>
        <authorList>
            <person name="Kelkar D.S."/>
            <person name="Kumar D."/>
            <person name="Kumar P."/>
            <person name="Balakrishnan L."/>
            <person name="Muthusamy B."/>
            <person name="Yadav A.K."/>
            <person name="Shrivastava P."/>
            <person name="Marimuthu A."/>
            <person name="Anand S."/>
            <person name="Sundaram H."/>
            <person name="Kingsbury R."/>
            <person name="Harsha H.C."/>
            <person name="Nair B."/>
            <person name="Prasad T.S."/>
            <person name="Chauhan D.S."/>
            <person name="Katoch K."/>
            <person name="Katoch V.M."/>
            <person name="Kumar P."/>
            <person name="Chaerkady R."/>
            <person name="Ramachandran S."/>
            <person name="Dash D."/>
            <person name="Pandey A."/>
        </authorList>
    </citation>
    <scope>IDENTIFICATION BY MASS SPECTROMETRY [LARGE SCALE ANALYSIS]</scope>
    <source>
        <strain>ATCC 25618 / H37Rv</strain>
    </source>
</reference>
<reference evidence="13" key="4">
    <citation type="journal article" date="2018" name="Acta Crystallogr. D">
        <title>The crystal structure of an essential high-temperature requirement protein HtrA1 (Rv1223) from Mycobacterium tuberculosis reveals its unique features.</title>
        <authorList>
            <person name="Singh K.H."/>
            <person name="Yadav S."/>
            <person name="Kumar D."/>
            <person name="Biswal B.K."/>
        </authorList>
    </citation>
    <scope>X-RAY CRYSTALLOGRAPHY (2.70 ANGSTROMS) OF 206-528 OF MUTANT ALA-387</scope>
    <scope>SUBUNIT</scope>
    <scope>DOMAIN</scope>
</reference>
<reference evidence="14" key="5">
    <citation type="journal article" date="2018" name="Acta Crystallogr. F Struct. Biol. Commun.">
        <title>The crystal structure of Mycobacterium tuberculosis high-temperature requirement A protein reveals an autoregulatory mechanism.</title>
        <authorList>
            <person name="Gupta A.K."/>
            <person name="Behera D."/>
            <person name="Gopal B."/>
        </authorList>
    </citation>
    <scope>X-RAY CRYSTALLOGRAPHY (1.83 ANGSTROMS) OF 223-528</scope>
    <scope>FUNCTION</scope>
    <scope>SUBUNIT</scope>
    <scope>DOMAIN</scope>
</reference>
<organism>
    <name type="scientific">Mycobacterium tuberculosis (strain ATCC 25618 / H37Rv)</name>
    <dbReference type="NCBI Taxonomy" id="83332"/>
    <lineage>
        <taxon>Bacteria</taxon>
        <taxon>Bacillati</taxon>
        <taxon>Actinomycetota</taxon>
        <taxon>Actinomycetes</taxon>
        <taxon>Mycobacteriales</taxon>
        <taxon>Mycobacteriaceae</taxon>
        <taxon>Mycobacterium</taxon>
        <taxon>Mycobacterium tuberculosis complex</taxon>
    </lineage>
</organism>
<gene>
    <name evidence="9" type="primary">htrA1</name>
    <name evidence="9" type="synonym">degP</name>
    <name evidence="8" type="synonym">htrA</name>
    <name evidence="12" type="ordered locus">Rv1223</name>
</gene>
<protein>
    <recommendedName>
        <fullName evidence="10">Probable serine protease HtrA1</fullName>
        <ecNumber evidence="1">3.4.21.107</ecNumber>
    </recommendedName>
    <alternativeName>
        <fullName evidence="9">High-temperature requirement A protease</fullName>
    </alternativeName>
</protein>
<feature type="chain" id="PRO_0000450814" description="Probable serine protease HtrA1">
    <location>
        <begin position="1"/>
        <end position="528"/>
    </location>
</feature>
<feature type="topological domain" description="Cytoplasmic" evidence="11">
    <location>
        <begin position="1"/>
        <end position="178"/>
    </location>
</feature>
<feature type="transmembrane region" description="Helical" evidence="2">
    <location>
        <begin position="179"/>
        <end position="199"/>
    </location>
</feature>
<feature type="topological domain" description="Periplasmic" evidence="11">
    <location>
        <begin position="200"/>
        <end position="528"/>
    </location>
</feature>
<feature type="domain" description="PDZ" evidence="3">
    <location>
        <begin position="426"/>
        <end position="487"/>
    </location>
</feature>
<feature type="region of interest" description="Disordered" evidence="4">
    <location>
        <begin position="1"/>
        <end position="70"/>
    </location>
</feature>
<feature type="compositionally biased region" description="Gly residues" evidence="4">
    <location>
        <begin position="31"/>
        <end position="40"/>
    </location>
</feature>
<feature type="active site" description="Charge relay system" evidence="1">
    <location>
        <position position="270"/>
    </location>
</feature>
<feature type="active site" description="Charge relay system" evidence="1">
    <location>
        <position position="306"/>
    </location>
</feature>
<feature type="active site" description="Charge relay system" evidence="1">
    <location>
        <position position="387"/>
    </location>
</feature>
<feature type="helix" evidence="16">
    <location>
        <begin position="228"/>
        <end position="236"/>
    </location>
</feature>
<feature type="helix" evidence="16">
    <location>
        <begin position="237"/>
        <end position="239"/>
    </location>
</feature>
<feature type="strand" evidence="16">
    <location>
        <begin position="240"/>
        <end position="246"/>
    </location>
</feature>
<feature type="strand" evidence="16">
    <location>
        <begin position="251"/>
        <end position="260"/>
    </location>
</feature>
<feature type="turn" evidence="16">
    <location>
        <begin position="261"/>
        <end position="263"/>
    </location>
</feature>
<feature type="strand" evidence="16">
    <location>
        <begin position="264"/>
        <end position="268"/>
    </location>
</feature>
<feature type="helix" evidence="16">
    <location>
        <begin position="269"/>
        <end position="277"/>
    </location>
</feature>
<feature type="turn" evidence="16">
    <location>
        <begin position="279"/>
        <end position="281"/>
    </location>
</feature>
<feature type="strand" evidence="16">
    <location>
        <begin position="283"/>
        <end position="287"/>
    </location>
</feature>
<feature type="strand" evidence="16">
    <location>
        <begin position="293"/>
        <end position="295"/>
    </location>
</feature>
<feature type="strand" evidence="16">
    <location>
        <begin position="297"/>
        <end position="302"/>
    </location>
</feature>
<feature type="turn" evidence="16">
    <location>
        <begin position="303"/>
        <end position="306"/>
    </location>
</feature>
<feature type="strand" evidence="16">
    <location>
        <begin position="307"/>
        <end position="311"/>
    </location>
</feature>
<feature type="helix" evidence="16">
    <location>
        <begin position="326"/>
        <end position="328"/>
    </location>
</feature>
<feature type="strand" evidence="16">
    <location>
        <begin position="334"/>
        <end position="338"/>
    </location>
</feature>
<feature type="strand" evidence="17">
    <location>
        <begin position="343"/>
        <end position="345"/>
    </location>
</feature>
<feature type="strand" evidence="16">
    <location>
        <begin position="348"/>
        <end position="362"/>
    </location>
</feature>
<feature type="strand" evidence="16">
    <location>
        <begin position="365"/>
        <end position="367"/>
    </location>
</feature>
<feature type="strand" evidence="16">
    <location>
        <begin position="371"/>
        <end position="380"/>
    </location>
</feature>
<feature type="turn" evidence="16">
    <location>
        <begin position="384"/>
        <end position="388"/>
    </location>
</feature>
<feature type="strand" evidence="16">
    <location>
        <begin position="389"/>
        <end position="392"/>
    </location>
</feature>
<feature type="strand" evidence="16">
    <location>
        <begin position="398"/>
        <end position="402"/>
    </location>
</feature>
<feature type="strand" evidence="16">
    <location>
        <begin position="416"/>
        <end position="420"/>
    </location>
</feature>
<feature type="helix" evidence="16">
    <location>
        <begin position="421"/>
        <end position="434"/>
    </location>
</feature>
<feature type="strand" evidence="16">
    <location>
        <begin position="444"/>
        <end position="449"/>
    </location>
</feature>
<feature type="strand" evidence="16">
    <location>
        <begin position="451"/>
        <end position="453"/>
    </location>
</feature>
<feature type="strand" evidence="16">
    <location>
        <begin position="456"/>
        <end position="462"/>
    </location>
</feature>
<feature type="helix" evidence="16">
    <location>
        <begin position="467"/>
        <end position="471"/>
    </location>
</feature>
<feature type="strand" evidence="16">
    <location>
        <begin position="478"/>
        <end position="482"/>
    </location>
</feature>
<feature type="helix" evidence="16">
    <location>
        <begin position="490"/>
        <end position="497"/>
    </location>
</feature>
<feature type="strand" evidence="15">
    <location>
        <begin position="502"/>
        <end position="504"/>
    </location>
</feature>
<feature type="strand" evidence="16">
    <location>
        <begin position="506"/>
        <end position="512"/>
    </location>
</feature>
<feature type="strand" evidence="16">
    <location>
        <begin position="515"/>
        <end position="521"/>
    </location>
</feature>
<feature type="strand" evidence="16">
    <location>
        <begin position="524"/>
        <end position="527"/>
    </location>
</feature>
<name>HTRA1_MYCTU</name>
<sequence length="528" mass="54190">MDTRVDTDNAMPARFSAQIQNEDEVTSDQGNNGGPNGGGRLAPRPVFRPPVDPASRQAFGRPSGVQGSFVAERVRPQKYQDQSDFTPNDQLADPVLQEAFGRPFAGAESLQRHPIDAGALAAEKDGAGPDEPDDPWRDPAAAAALGTPALAAPAPHGALAGSGKLGVRDVLFGGKVSYLALGILVAIALVIGGIGGVIGRKTAEVVDAFTTSKVTLSTTGNAQEPAGRFTKVAAAVADSVVTIESVSDQEGMQGSGVIVDGRGYIVTNNHVISEAANNPSQFKTTVVFNDGKEVPANLVGRDPKTDLAVLKVDNVDNLTVARLGDSSKVRVGDEVLAVGAPLGLRSTVTQGIVSALHRPVPLSGEGSDTDTVIDAIQTDASINHGNSGGPLIDMDAQVIGINTAGKSLSDSASGLGFAIPVNEMKLVANSLIKDGKIVHPTLGISTRSVSNAIASGAQVANVKAGSPAQKGGILENDVIVKVGNRAVADSDEFVVAVRQLAIGQDAPIEVVREGRHVTLTVKPDPDST</sequence>